<reference key="1">
    <citation type="journal article" date="2004" name="Genome Res.">
        <title>The status, quality, and expansion of the NIH full-length cDNA project: the Mammalian Gene Collection (MGC).</title>
        <authorList>
            <consortium name="The MGC Project Team"/>
        </authorList>
    </citation>
    <scope>NUCLEOTIDE SEQUENCE [LARGE SCALE MRNA]</scope>
    <source>
        <tissue>Testis</tissue>
    </source>
</reference>
<reference key="2">
    <citation type="journal article" date="2012" name="Nat. Commun.">
        <title>Quantitative maps of protein phosphorylation sites across 14 different rat organs and tissues.</title>
        <authorList>
            <person name="Lundby A."/>
            <person name="Secher A."/>
            <person name="Lage K."/>
            <person name="Nordsborg N.B."/>
            <person name="Dmytriyev A."/>
            <person name="Lundby C."/>
            <person name="Olsen J.V."/>
        </authorList>
    </citation>
    <scope>PHOSPHORYLATION [LARGE SCALE ANALYSIS] AT SER-270</scope>
    <scope>IDENTIFICATION BY MASS SPECTROMETRY [LARGE SCALE ANALYSIS]</scope>
</reference>
<comment type="similarity">
    <text evidence="2">Belongs to the FAM228 family.</text>
</comment>
<comment type="sequence caution" evidence="2">
    <conflict type="erroneous initiation">
        <sequence resource="EMBL-CDS" id="AAH83643"/>
    </conflict>
    <text>Truncated N-terminus.</text>
</comment>
<feature type="chain" id="PRO_0000348447" description="Protein FAM228A">
    <location>
        <begin position="1"/>
        <end position="306"/>
    </location>
</feature>
<feature type="region of interest" description="Disordered" evidence="1">
    <location>
        <begin position="237"/>
        <end position="277"/>
    </location>
</feature>
<feature type="modified residue" description="Phosphoserine" evidence="3">
    <location>
        <position position="270"/>
    </location>
</feature>
<gene>
    <name type="primary">Fam228a</name>
</gene>
<proteinExistence type="evidence at protein level"/>
<name>F228A_RAT</name>
<keyword id="KW-0597">Phosphoprotein</keyword>
<keyword id="KW-1185">Reference proteome</keyword>
<dbReference type="EMBL" id="BC083643">
    <property type="protein sequence ID" value="AAH83643.1"/>
    <property type="status" value="ALT_INIT"/>
    <property type="molecule type" value="mRNA"/>
</dbReference>
<dbReference type="RefSeq" id="NP_001014096.2">
    <property type="nucleotide sequence ID" value="NM_001014074.2"/>
</dbReference>
<dbReference type="RefSeq" id="XP_006239920.1">
    <property type="nucleotide sequence ID" value="XM_006239858.5"/>
</dbReference>
<dbReference type="SMR" id="Q5XIN5"/>
<dbReference type="FunCoup" id="Q5XIN5">
    <property type="interactions" value="1"/>
</dbReference>
<dbReference type="STRING" id="10116.ENSRNOP00000065885"/>
<dbReference type="iPTMnet" id="Q5XIN5"/>
<dbReference type="PhosphoSitePlus" id="Q5XIN5"/>
<dbReference type="PaxDb" id="10116-ENSRNOP00000065885"/>
<dbReference type="DNASU" id="313936"/>
<dbReference type="Ensembl" id="ENSRNOT00000070908.3">
    <property type="protein sequence ID" value="ENSRNOP00000065885.1"/>
    <property type="gene ID" value="ENSRNOG00000050114.3"/>
</dbReference>
<dbReference type="GeneID" id="313936"/>
<dbReference type="KEGG" id="rno:313936"/>
<dbReference type="AGR" id="RGD:1359275"/>
<dbReference type="CTD" id="653140"/>
<dbReference type="RGD" id="1359275">
    <property type="gene designation" value="Fam228a"/>
</dbReference>
<dbReference type="eggNOG" id="ENOG502RU0D">
    <property type="taxonomic scope" value="Eukaryota"/>
</dbReference>
<dbReference type="GeneTree" id="ENSGT00530000064185"/>
<dbReference type="HOGENOM" id="CLU_079089_0_0_1"/>
<dbReference type="InParanoid" id="Q5XIN5"/>
<dbReference type="OMA" id="QHRPRSW"/>
<dbReference type="OrthoDB" id="9905773at2759"/>
<dbReference type="PhylomeDB" id="Q5XIN5"/>
<dbReference type="PRO" id="PR:Q5XIN5"/>
<dbReference type="Proteomes" id="UP000002494">
    <property type="component" value="Chromosome 6"/>
</dbReference>
<dbReference type="Bgee" id="ENSRNOG00000050114">
    <property type="expression patterns" value="Expressed in testis and 1 other cell type or tissue"/>
</dbReference>
<dbReference type="InterPro" id="IPR040046">
    <property type="entry name" value="FAM228"/>
</dbReference>
<dbReference type="PANTHER" id="PTHR28584">
    <property type="entry name" value="FAMILY WITH SEQUENCE SIMILARITY 228 MEMBER A"/>
    <property type="match status" value="1"/>
</dbReference>
<dbReference type="PANTHER" id="PTHR28584:SF2">
    <property type="entry name" value="PROTEIN FAM228A"/>
    <property type="match status" value="1"/>
</dbReference>
<organism>
    <name type="scientific">Rattus norvegicus</name>
    <name type="common">Rat</name>
    <dbReference type="NCBI Taxonomy" id="10116"/>
    <lineage>
        <taxon>Eukaryota</taxon>
        <taxon>Metazoa</taxon>
        <taxon>Chordata</taxon>
        <taxon>Craniata</taxon>
        <taxon>Vertebrata</taxon>
        <taxon>Euteleostomi</taxon>
        <taxon>Mammalia</taxon>
        <taxon>Eutheria</taxon>
        <taxon>Euarchontoglires</taxon>
        <taxon>Glires</taxon>
        <taxon>Rodentia</taxon>
        <taxon>Myomorpha</taxon>
        <taxon>Muroidea</taxon>
        <taxon>Muridae</taxon>
        <taxon>Murinae</taxon>
        <taxon>Rattus</taxon>
    </lineage>
</organism>
<protein>
    <recommendedName>
        <fullName>Protein FAM228A</fullName>
    </recommendedName>
</protein>
<accession>Q5XIN5</accession>
<evidence type="ECO:0000256" key="1">
    <source>
        <dbReference type="SAM" id="MobiDB-lite"/>
    </source>
</evidence>
<evidence type="ECO:0000305" key="2"/>
<evidence type="ECO:0007744" key="3">
    <source>
    </source>
</evidence>
<sequence>MADTKSSNCNEHFSVEKLKEWPEPESVSLMKELAREDIDEAVHAILFRENYIVKKLDTYLQHEAVFKERRKEMLHKKWVENVAQPLQQRIIEKLFSYRRPGKSQVKYEYCLKHTNEPTKPSPLCECLFQKQQALREAKGPSYHRGRGKQPGIQKEAKETEKGLLFTRSPQFPLRSHCTVPRDRQRLHARFVQNKPCGRNKYKGAGSEKVSYALKPHLPKEEKKTVNRSQLGFERQFHASKLSQQNKGAEKKGLALGTRAQRPRSWAAADSPQGTPLVGRRVMTAEILGKHLASLQQASRAVYSNSP</sequence>